<name>ARGB_ECOL5</name>
<feature type="chain" id="PRO_0000264707" description="Acetylglutamate kinase">
    <location>
        <begin position="1"/>
        <end position="258"/>
    </location>
</feature>
<feature type="binding site" evidence="1">
    <location>
        <begin position="44"/>
        <end position="45"/>
    </location>
    <ligand>
        <name>substrate</name>
    </ligand>
</feature>
<feature type="binding site" evidence="1">
    <location>
        <position position="66"/>
    </location>
    <ligand>
        <name>substrate</name>
    </ligand>
</feature>
<feature type="binding site" evidence="1">
    <location>
        <position position="158"/>
    </location>
    <ligand>
        <name>substrate</name>
    </ligand>
</feature>
<feature type="binding site" evidence="1">
    <location>
        <begin position="181"/>
        <end position="186"/>
    </location>
    <ligand>
        <name>ATP</name>
        <dbReference type="ChEBI" id="CHEBI:30616"/>
    </ligand>
</feature>
<feature type="binding site" evidence="1">
    <location>
        <begin position="209"/>
        <end position="211"/>
    </location>
    <ligand>
        <name>ATP</name>
        <dbReference type="ChEBI" id="CHEBI:30616"/>
    </ligand>
</feature>
<feature type="site" description="Transition state stabilizer" evidence="1">
    <location>
        <position position="8"/>
    </location>
</feature>
<feature type="site" description="Transition state stabilizer" evidence="1">
    <location>
        <position position="217"/>
    </location>
</feature>
<dbReference type="EC" id="2.7.2.8" evidence="1"/>
<dbReference type="EMBL" id="CP000247">
    <property type="protein sequence ID" value="ABG72128.1"/>
    <property type="status" value="ALT_INIT"/>
    <property type="molecule type" value="Genomic_DNA"/>
</dbReference>
<dbReference type="SMR" id="Q0TAA1"/>
<dbReference type="KEGG" id="ecp:ECP_4172"/>
<dbReference type="HOGENOM" id="CLU_053680_1_1_6"/>
<dbReference type="UniPathway" id="UPA00068">
    <property type="reaction ID" value="UER00107"/>
</dbReference>
<dbReference type="Proteomes" id="UP000009182">
    <property type="component" value="Chromosome"/>
</dbReference>
<dbReference type="GO" id="GO:0005737">
    <property type="term" value="C:cytoplasm"/>
    <property type="evidence" value="ECO:0007669"/>
    <property type="project" value="UniProtKB-SubCell"/>
</dbReference>
<dbReference type="GO" id="GO:0003991">
    <property type="term" value="F:acetylglutamate kinase activity"/>
    <property type="evidence" value="ECO:0007669"/>
    <property type="project" value="UniProtKB-UniRule"/>
</dbReference>
<dbReference type="GO" id="GO:0005524">
    <property type="term" value="F:ATP binding"/>
    <property type="evidence" value="ECO:0007669"/>
    <property type="project" value="UniProtKB-UniRule"/>
</dbReference>
<dbReference type="GO" id="GO:0042450">
    <property type="term" value="P:arginine biosynthetic process via ornithine"/>
    <property type="evidence" value="ECO:0007669"/>
    <property type="project" value="UniProtKB-UniRule"/>
</dbReference>
<dbReference type="GO" id="GO:0006526">
    <property type="term" value="P:L-arginine biosynthetic process"/>
    <property type="evidence" value="ECO:0007669"/>
    <property type="project" value="UniProtKB-UniPathway"/>
</dbReference>
<dbReference type="CDD" id="cd04249">
    <property type="entry name" value="AAK_NAGK-NC"/>
    <property type="match status" value="1"/>
</dbReference>
<dbReference type="FunFam" id="3.40.1160.10:FF:000008">
    <property type="entry name" value="Acetylglutamate kinase"/>
    <property type="match status" value="1"/>
</dbReference>
<dbReference type="Gene3D" id="3.40.1160.10">
    <property type="entry name" value="Acetylglutamate kinase-like"/>
    <property type="match status" value="1"/>
</dbReference>
<dbReference type="HAMAP" id="MF_00082">
    <property type="entry name" value="ArgB"/>
    <property type="match status" value="1"/>
</dbReference>
<dbReference type="InterPro" id="IPR036393">
    <property type="entry name" value="AceGlu_kinase-like_sf"/>
</dbReference>
<dbReference type="InterPro" id="IPR004662">
    <property type="entry name" value="AcgluKinase_fam"/>
</dbReference>
<dbReference type="InterPro" id="IPR037528">
    <property type="entry name" value="ArgB"/>
</dbReference>
<dbReference type="InterPro" id="IPR001048">
    <property type="entry name" value="Asp/Glu/Uridylate_kinase"/>
</dbReference>
<dbReference type="InterPro" id="IPR041731">
    <property type="entry name" value="NAGK-NC"/>
</dbReference>
<dbReference type="NCBIfam" id="TIGR00761">
    <property type="entry name" value="argB"/>
    <property type="match status" value="1"/>
</dbReference>
<dbReference type="PANTHER" id="PTHR23342">
    <property type="entry name" value="N-ACETYLGLUTAMATE SYNTHASE"/>
    <property type="match status" value="1"/>
</dbReference>
<dbReference type="PANTHER" id="PTHR23342:SF0">
    <property type="entry name" value="N-ACETYLGLUTAMATE SYNTHASE, MITOCHONDRIAL"/>
    <property type="match status" value="1"/>
</dbReference>
<dbReference type="Pfam" id="PF00696">
    <property type="entry name" value="AA_kinase"/>
    <property type="match status" value="1"/>
</dbReference>
<dbReference type="PIRSF" id="PIRSF000728">
    <property type="entry name" value="NAGK"/>
    <property type="match status" value="1"/>
</dbReference>
<dbReference type="SUPFAM" id="SSF53633">
    <property type="entry name" value="Carbamate kinase-like"/>
    <property type="match status" value="1"/>
</dbReference>
<sequence length="258" mass="27190">MMNPLIIKLGGVLLDSEEALERLFSALVNYRESHQRQLVIVHGGGCVVDELMKGLNLPVKKKNGLRVTPADQIDIITGALAGTANKTLLAWAKKHQIAAVGLFLGDGDSVKVTQLDEELGHVGLAQPGSPKLINSLLENGYLPVVSSIGVTNEGQLMNVNADQAATALAATLGADLILLSDVSGILDGKGQRIAEMTAAKAEQLIEQGIITDGMIVKVNAALDAARTLGRPVDIASWRHAEQLPALFNGMPMGTRILA</sequence>
<comment type="function">
    <text evidence="1">Catalyzes the ATP-dependent phosphorylation of N-acetyl-L-glutamate.</text>
</comment>
<comment type="catalytic activity">
    <reaction evidence="1">
        <text>N-acetyl-L-glutamate + ATP = N-acetyl-L-glutamyl 5-phosphate + ADP</text>
        <dbReference type="Rhea" id="RHEA:14629"/>
        <dbReference type="ChEBI" id="CHEBI:30616"/>
        <dbReference type="ChEBI" id="CHEBI:44337"/>
        <dbReference type="ChEBI" id="CHEBI:57936"/>
        <dbReference type="ChEBI" id="CHEBI:456216"/>
        <dbReference type="EC" id="2.7.2.8"/>
    </reaction>
</comment>
<comment type="pathway">
    <text evidence="1">Amino-acid biosynthesis; L-arginine biosynthesis; N(2)-acetyl-L-ornithine from L-glutamate: step 2/4.</text>
</comment>
<comment type="subunit">
    <text evidence="1">Homodimer.</text>
</comment>
<comment type="subcellular location">
    <subcellularLocation>
        <location evidence="1">Cytoplasm</location>
    </subcellularLocation>
</comment>
<comment type="similarity">
    <text evidence="1">Belongs to the acetylglutamate kinase family. ArgB subfamily.</text>
</comment>
<comment type="sequence caution" evidence="2">
    <conflict type="erroneous initiation">
        <sequence resource="EMBL-CDS" id="ABG72128"/>
    </conflict>
</comment>
<reference key="1">
    <citation type="journal article" date="2006" name="Mol. Microbiol.">
        <title>Role of pathogenicity island-associated integrases in the genome plasticity of uropathogenic Escherichia coli strain 536.</title>
        <authorList>
            <person name="Hochhut B."/>
            <person name="Wilde C."/>
            <person name="Balling G."/>
            <person name="Middendorf B."/>
            <person name="Dobrindt U."/>
            <person name="Brzuszkiewicz E."/>
            <person name="Gottschalk G."/>
            <person name="Carniel E."/>
            <person name="Hacker J."/>
        </authorList>
    </citation>
    <scope>NUCLEOTIDE SEQUENCE [LARGE SCALE GENOMIC DNA]</scope>
    <source>
        <strain>536 / UPEC</strain>
    </source>
</reference>
<evidence type="ECO:0000255" key="1">
    <source>
        <dbReference type="HAMAP-Rule" id="MF_00082"/>
    </source>
</evidence>
<evidence type="ECO:0000305" key="2"/>
<proteinExistence type="inferred from homology"/>
<accession>Q0TAA1</accession>
<organism>
    <name type="scientific">Escherichia coli O6:K15:H31 (strain 536 / UPEC)</name>
    <dbReference type="NCBI Taxonomy" id="362663"/>
    <lineage>
        <taxon>Bacteria</taxon>
        <taxon>Pseudomonadati</taxon>
        <taxon>Pseudomonadota</taxon>
        <taxon>Gammaproteobacteria</taxon>
        <taxon>Enterobacterales</taxon>
        <taxon>Enterobacteriaceae</taxon>
        <taxon>Escherichia</taxon>
    </lineage>
</organism>
<gene>
    <name evidence="1" type="primary">argB</name>
    <name type="ordered locus">ECP_4172</name>
</gene>
<keyword id="KW-0028">Amino-acid biosynthesis</keyword>
<keyword id="KW-0055">Arginine biosynthesis</keyword>
<keyword id="KW-0067">ATP-binding</keyword>
<keyword id="KW-0963">Cytoplasm</keyword>
<keyword id="KW-0418">Kinase</keyword>
<keyword id="KW-0547">Nucleotide-binding</keyword>
<keyword id="KW-0808">Transferase</keyword>
<protein>
    <recommendedName>
        <fullName evidence="1">Acetylglutamate kinase</fullName>
        <ecNumber evidence="1">2.7.2.8</ecNumber>
    </recommendedName>
    <alternativeName>
        <fullName evidence="1">N-acetyl-L-glutamate 5-phosphotransferase</fullName>
    </alternativeName>
    <alternativeName>
        <fullName evidence="1">NAG kinase</fullName>
        <shortName evidence="1">NAGK</shortName>
    </alternativeName>
</protein>